<keyword id="KW-0963">Cytoplasm</keyword>
<keyword id="KW-0378">Hydrolase</keyword>
<keyword id="KW-0460">Magnesium</keyword>
<keyword id="KW-0479">Metal-binding</keyword>
<keyword id="KW-1185">Reference proteome</keyword>
<feature type="chain" id="PRO_0000247225" description="5'-nucleotidase domain-containing protein 2">
    <location>
        <begin position="1"/>
        <end position="553"/>
    </location>
</feature>
<feature type="region of interest" description="Disordered" evidence="2">
    <location>
        <begin position="26"/>
        <end position="51"/>
    </location>
</feature>
<feature type="active site" description="Nucleophile" evidence="1">
    <location>
        <position position="106"/>
    </location>
</feature>
<feature type="active site" description="Proton donor" evidence="1">
    <location>
        <position position="108"/>
    </location>
</feature>
<feature type="binding site" evidence="1">
    <location>
        <position position="106"/>
    </location>
    <ligand>
        <name>Mg(2+)</name>
        <dbReference type="ChEBI" id="CHEBI:18420"/>
    </ligand>
</feature>
<feature type="binding site" evidence="1">
    <location>
        <position position="108"/>
    </location>
    <ligand>
        <name>Mg(2+)</name>
        <dbReference type="ChEBI" id="CHEBI:18420"/>
    </ligand>
</feature>
<feature type="binding site" evidence="1">
    <location>
        <position position="391"/>
    </location>
    <ligand>
        <name>Mg(2+)</name>
        <dbReference type="ChEBI" id="CHEBI:18420"/>
    </ligand>
</feature>
<feature type="sequence conflict" description="In Ref. 1; AAS75314." evidence="7" ref="1">
    <original>D</original>
    <variation>Y</variation>
    <location>
        <position position="186"/>
    </location>
</feature>
<feature type="sequence conflict" description="In Ref. 1; AAS75314." evidence="7" ref="1">
    <original>V</original>
    <variation>D</variation>
    <location>
        <position position="190"/>
    </location>
</feature>
<feature type="sequence conflict" description="In Ref. 1; AAS75314." evidence="7" ref="1">
    <original>V</original>
    <variation>G</variation>
    <location>
        <position position="329"/>
    </location>
</feature>
<feature type="sequence conflict" description="In Ref. 1; AAS75314." evidence="7" ref="1">
    <original>L</original>
    <variation>M</variation>
    <location>
        <position position="431"/>
    </location>
</feature>
<feature type="sequence conflict" description="In Ref. 1; AAS75314." evidence="7" ref="1">
    <original>R</original>
    <variation>G</variation>
    <location>
        <position position="494"/>
    </location>
</feature>
<feature type="sequence conflict" description="In Ref. 1; AAS75314." evidence="7" ref="1">
    <original>L</original>
    <variation>F</variation>
    <location>
        <position position="506"/>
    </location>
</feature>
<feature type="sequence conflict" description="In Ref. 1; AAS75314." evidence="7" ref="1">
    <original>L</original>
    <variation>F</variation>
    <location>
        <position position="546"/>
    </location>
</feature>
<name>NT5D2_RAT</name>
<comment type="function">
    <text evidence="4 5 6">Promotes dephosphorylation of tyrosine 3-monooxygenase TH which decreases TH catalytic activity and leads to reduced synthesis of catecholamines including dopamine, noradrenaline and adrenaline (PubMed:31279527, PubMed:32778969, PubMed:38382359). The exact mechanism of activity is unknown but may act as a phosphatase or promote the activity of phosphatases or may inhibit phosphorylation by acting as a barrier to interfere with protein kinase access (PubMed:32778969, PubMed:38382359).</text>
</comment>
<comment type="subunit">
    <text evidence="4 6">Interacts with tyrosine 3-monooxygenase TH; the interaction results in reduced phosphorylation and decreased catalytic activity of TH.</text>
</comment>
<comment type="subcellular location">
    <subcellularLocation>
        <location evidence="5">Cytoplasm</location>
    </subcellularLocation>
</comment>
<comment type="tissue specificity">
    <text evidence="3">Expressed in eye iridocorneal angle.</text>
</comment>
<comment type="similarity">
    <text evidence="7">Belongs to the 5'(3')-deoxyribonucleotidase family.</text>
</comment>
<organism>
    <name type="scientific">Rattus norvegicus</name>
    <name type="common">Rat</name>
    <dbReference type="NCBI Taxonomy" id="10116"/>
    <lineage>
        <taxon>Eukaryota</taxon>
        <taxon>Metazoa</taxon>
        <taxon>Chordata</taxon>
        <taxon>Craniata</taxon>
        <taxon>Vertebrata</taxon>
        <taxon>Euteleostomi</taxon>
        <taxon>Mammalia</taxon>
        <taxon>Eutheria</taxon>
        <taxon>Euarchontoglires</taxon>
        <taxon>Glires</taxon>
        <taxon>Rodentia</taxon>
        <taxon>Myomorpha</taxon>
        <taxon>Muroidea</taxon>
        <taxon>Muridae</taxon>
        <taxon>Murinae</taxon>
        <taxon>Rattus</taxon>
    </lineage>
</organism>
<accession>Q6Q0N3</accession>
<accession>Q5M7U9</accession>
<reference key="1">
    <citation type="journal article" date="2004" name="Invest. Ophthalmol. Vis. Sci.">
        <title>Gene expression profile of the rat eye iridocorneal angle: NEIBank expressed sequence tag analysis.</title>
        <authorList>
            <person name="Ahmed F."/>
            <person name="Torrado M."/>
            <person name="Zinovieva R.D."/>
            <person name="Senatorov V.V."/>
            <person name="Wistow G."/>
            <person name="Tomarev S.I."/>
        </authorList>
    </citation>
    <scope>NUCLEOTIDE SEQUENCE [LARGE SCALE MRNA]</scope>
    <scope>TISSUE SPECIFICITY</scope>
    <source>
        <strain>Wistar</strain>
    </source>
</reference>
<reference key="2">
    <citation type="journal article" date="2004" name="Genome Res.">
        <title>The status, quality, and expansion of the NIH full-length cDNA project: the Mammalian Gene Collection (MGC).</title>
        <authorList>
            <consortium name="The MGC Project Team"/>
        </authorList>
    </citation>
    <scope>NUCLEOTIDE SEQUENCE [LARGE SCALE MRNA]</scope>
    <source>
        <tissue>Lung</tissue>
    </source>
</reference>
<reference key="3">
    <citation type="journal article" date="2019" name="Biochem. Biophys. Res. Commun.">
        <title>Identification by nano-LC-MS/MS of NT5DC2 as a protein binding to tyrosine hydroxylase: Down-regulation of NT5DC2 by siRNA increases catecholamine synthesis in PC12D cells.</title>
        <authorList>
            <person name="Nakashima A."/>
            <person name="Yamaguchi H."/>
            <person name="Kodani Y."/>
            <person name="Kaneko Y.S."/>
            <person name="Kawata M."/>
            <person name="Nagasaki H."/>
            <person name="Nagatsu T."/>
            <person name="Ota A."/>
        </authorList>
    </citation>
    <scope>FUNCTION</scope>
    <scope>INTERACTION WITH TH</scope>
</reference>
<reference key="4">
    <citation type="journal article" date="2020" name="J. Neural Transm.">
        <title>NT5DC2 affects the phosphorylation of tyrosine hydroxylase regulating its catalytic activity.</title>
        <authorList>
            <person name="Nakashima A."/>
            <person name="Yamaguchi H."/>
            <person name="Kondo M."/>
            <person name="Furumura T."/>
            <person name="Kodani Y."/>
            <person name="Kaneko Y.S."/>
            <person name="Kawata M."/>
            <person name="Nagasaki H."/>
            <person name="Nagatsu T."/>
            <person name="Ota A."/>
        </authorList>
    </citation>
    <scope>FUNCTION</scope>
    <scope>SUBCELLULAR LOCATION</scope>
</reference>
<reference key="5">
    <citation type="journal article" date="2024" name="Biochem. Biophys. Res. Commun.">
        <title>Role of NT5DC2 in tyrosine hydroxylase phosphorylation based on the analysis of NT5DC2-binding proteins.</title>
        <authorList>
            <person name="Yamaguchi H."/>
            <person name="Hara S."/>
            <person name="Ichinose H."/>
            <person name="Nagasaki H."/>
            <person name="Nakashima A."/>
        </authorList>
    </citation>
    <scope>FUNCTION</scope>
    <scope>INTERACTION WITH TH</scope>
</reference>
<gene>
    <name type="primary">Nt5dc2</name>
</gene>
<evidence type="ECO:0000250" key="1">
    <source>
        <dbReference type="UniProtKB" id="P49902"/>
    </source>
</evidence>
<evidence type="ECO:0000256" key="2">
    <source>
        <dbReference type="SAM" id="MobiDB-lite"/>
    </source>
</evidence>
<evidence type="ECO:0000269" key="3">
    <source>
    </source>
</evidence>
<evidence type="ECO:0000269" key="4">
    <source>
    </source>
</evidence>
<evidence type="ECO:0000269" key="5">
    <source>
    </source>
</evidence>
<evidence type="ECO:0000269" key="6">
    <source>
    </source>
</evidence>
<evidence type="ECO:0000305" key="7"/>
<dbReference type="EC" id="3.1.3.-"/>
<dbReference type="EMBL" id="AY569011">
    <property type="protein sequence ID" value="AAS75314.1"/>
    <property type="molecule type" value="mRNA"/>
</dbReference>
<dbReference type="EMBL" id="BC088431">
    <property type="protein sequence ID" value="AAH88431.1"/>
    <property type="molecule type" value="mRNA"/>
</dbReference>
<dbReference type="RefSeq" id="NP_001009271.1">
    <property type="nucleotide sequence ID" value="NM_001009271.1"/>
</dbReference>
<dbReference type="SMR" id="Q6Q0N3"/>
<dbReference type="FunCoup" id="Q6Q0N3">
    <property type="interactions" value="1368"/>
</dbReference>
<dbReference type="IntAct" id="Q6Q0N3">
    <property type="interactions" value="3"/>
</dbReference>
<dbReference type="STRING" id="10116.ENSRNOP00000024840"/>
<dbReference type="iPTMnet" id="Q6Q0N3"/>
<dbReference type="PhosphoSitePlus" id="Q6Q0N3"/>
<dbReference type="jPOST" id="Q6Q0N3"/>
<dbReference type="PaxDb" id="10116-ENSRNOP00000024840"/>
<dbReference type="GeneID" id="290558"/>
<dbReference type="KEGG" id="rno:290558"/>
<dbReference type="UCSC" id="RGD:1305524">
    <property type="organism name" value="rat"/>
</dbReference>
<dbReference type="AGR" id="RGD:1305524"/>
<dbReference type="CTD" id="64943"/>
<dbReference type="RGD" id="1305524">
    <property type="gene designation" value="Nt5dc2"/>
</dbReference>
<dbReference type="VEuPathDB" id="HostDB:ENSRNOG00000018358"/>
<dbReference type="eggNOG" id="KOG2470">
    <property type="taxonomic scope" value="Eukaryota"/>
</dbReference>
<dbReference type="HOGENOM" id="CLU_017845_5_1_1"/>
<dbReference type="InParanoid" id="Q6Q0N3"/>
<dbReference type="OrthoDB" id="25635at9989"/>
<dbReference type="PhylomeDB" id="Q6Q0N3"/>
<dbReference type="TreeFam" id="TF323990"/>
<dbReference type="PRO" id="PR:Q6Q0N3"/>
<dbReference type="Proteomes" id="UP000002494">
    <property type="component" value="Chromosome 16"/>
</dbReference>
<dbReference type="Bgee" id="ENSRNOG00000018358">
    <property type="expression patterns" value="Expressed in pancreas and 18 other cell types or tissues"/>
</dbReference>
<dbReference type="GO" id="GO:0005737">
    <property type="term" value="C:cytoplasm"/>
    <property type="evidence" value="ECO:0000314"/>
    <property type="project" value="UniProtKB"/>
</dbReference>
<dbReference type="GO" id="GO:0008253">
    <property type="term" value="F:5'-nucleotidase activity"/>
    <property type="evidence" value="ECO:0000318"/>
    <property type="project" value="GO_Central"/>
</dbReference>
<dbReference type="GO" id="GO:0046872">
    <property type="term" value="F:metal ion binding"/>
    <property type="evidence" value="ECO:0007669"/>
    <property type="project" value="UniProtKB-KW"/>
</dbReference>
<dbReference type="GO" id="GO:0045914">
    <property type="term" value="P:negative regulation of catecholamine metabolic process"/>
    <property type="evidence" value="ECO:0000315"/>
    <property type="project" value="UniProtKB"/>
</dbReference>
<dbReference type="GO" id="GO:1903180">
    <property type="term" value="P:negative regulation of dopamine biosynthetic process"/>
    <property type="evidence" value="ECO:0000315"/>
    <property type="project" value="UniProtKB"/>
</dbReference>
<dbReference type="GO" id="GO:0051354">
    <property type="term" value="P:negative regulation of oxidoreductase activity"/>
    <property type="evidence" value="ECO:0000315"/>
    <property type="project" value="UniProtKB"/>
</dbReference>
<dbReference type="GO" id="GO:0033137">
    <property type="term" value="P:negative regulation of peptidyl-serine phosphorylation"/>
    <property type="evidence" value="ECO:0000315"/>
    <property type="project" value="UniProtKB"/>
</dbReference>
<dbReference type="CDD" id="cd07522">
    <property type="entry name" value="HAD_cN-II"/>
    <property type="match status" value="1"/>
</dbReference>
<dbReference type="FunFam" id="3.40.50.1000:FF:000026">
    <property type="entry name" value="NT5DC3 isoform 1"/>
    <property type="match status" value="1"/>
</dbReference>
<dbReference type="Gene3D" id="3.40.50.1000">
    <property type="entry name" value="HAD superfamily/HAD-like"/>
    <property type="match status" value="1"/>
</dbReference>
<dbReference type="InterPro" id="IPR036412">
    <property type="entry name" value="HAD-like_sf"/>
</dbReference>
<dbReference type="InterPro" id="IPR008380">
    <property type="entry name" value="HAD-SF_hydro_IG_5-nucl"/>
</dbReference>
<dbReference type="InterPro" id="IPR023214">
    <property type="entry name" value="HAD_sf"/>
</dbReference>
<dbReference type="InterPro" id="IPR016695">
    <property type="entry name" value="Pur_nucleotidase"/>
</dbReference>
<dbReference type="NCBIfam" id="TIGR02244">
    <property type="entry name" value="HAD-IG-Ncltidse"/>
    <property type="match status" value="1"/>
</dbReference>
<dbReference type="PANTHER" id="PTHR12103">
    <property type="entry name" value="5'-NUCLEOTIDASE DOMAIN-CONTAINING"/>
    <property type="match status" value="1"/>
</dbReference>
<dbReference type="PANTHER" id="PTHR12103:SF14">
    <property type="entry name" value="5'-NUCLEOTIDASE DOMAIN-CONTAINING PROTEIN 2"/>
    <property type="match status" value="1"/>
</dbReference>
<dbReference type="Pfam" id="PF05761">
    <property type="entry name" value="5_nucleotid"/>
    <property type="match status" value="1"/>
</dbReference>
<dbReference type="PIRSF" id="PIRSF017434">
    <property type="entry name" value="Purine_5'-nucleotidase"/>
    <property type="match status" value="1"/>
</dbReference>
<dbReference type="SUPFAM" id="SSF56784">
    <property type="entry name" value="HAD-like"/>
    <property type="match status" value="1"/>
</dbReference>
<protein>
    <recommendedName>
        <fullName>5'-nucleotidase domain-containing protein 2</fullName>
        <ecNumber>3.1.3.-</ecNumber>
    </recommendedName>
</protein>
<proteinExistence type="evidence at protein level"/>
<sequence length="553" mass="63653">MAGAGLRAAARRWLLCGGQGGPRAASSSPSCPGCGPPGPGAHCPSTPRSAPADGADLSAHLWARYQDMRRLVHDLLPPEVCSLLNPAAIYANNEISLSDVEVYGFDYDYTLAQYADALHPEIFSAARDILIEHYKYPEGIRKYDYDPSFAIRGLHYDIQKSLLMKIDAFHYVQLGTAYRGLQPVPDDEVVDLYGGTQHIPLYQMSGFYGKGPSIKQFMDIFSLPEMALLSCVVDYFLGHGLEFDQVHLYKDVTDAIRDVHVKGLMYQWIEQDMEKYILRGDETFAVLSRLVAHGKQLFLITNSPFSFVDKGMRHMVGPDWRQLFDVVIVQADKPNFFTDRRKPFRKLDEKGSLHWDRITRLEKGKIYRQGNLFDFLRLTEWRGPRVLYFGDHLYSDLADLMLRHGWRTGAIIPELEREIRIINTEQYMHSLTWQQALTGLLERMQTYQDAESRQVLATWMKERQELRCITKALFNAQFGSIFRTFHNPTYFSRRLVRFSDLYMASLSCLLNYSVDFTFYPRRTPLQHEAPLWMDQLCTGCMKTPFLGDMAHIR</sequence>